<gene>
    <name type="primary">mt-co1</name>
    <name type="synonym">coi</name>
    <name type="synonym">coxi</name>
    <name type="synonym">mtco1</name>
</gene>
<reference key="1">
    <citation type="journal article" date="1991" name="Mol. Biol. Evol.">
        <title>Phylogenetic relationships of neopterygian fishes, inferred from mitochondrial DNA sequences.</title>
        <authorList>
            <person name="Normark B.B."/>
            <person name="McCune A.R."/>
            <person name="Harrison R.G."/>
        </authorList>
    </citation>
    <scope>NUCLEOTIDE SEQUENCE [GENOMIC DNA]</scope>
</reference>
<comment type="function">
    <text evidence="3">Component of the cytochrome c oxidase, the last enzyme in the mitochondrial electron transport chain which drives oxidative phosphorylation. The respiratory chain contains 3 multisubunit complexes succinate dehydrogenase (complex II, CII), ubiquinol-cytochrome c oxidoreductase (cytochrome b-c1 complex, complex III, CIII) and cytochrome c oxidase (complex IV, CIV), that cooperate to transfer electrons derived from NADH and succinate to molecular oxygen, creating an electrochemical gradient over the inner membrane that drives transmembrane transport and the ATP synthase. Cytochrome c oxidase is the component of the respiratory chain that catalyzes the reduction of oxygen to water. Electrons originating from reduced cytochrome c in the intermembrane space (IMS) are transferred via the dinuclear copper A center (CU(A)) of subunit 2 and heme A of subunit 1 to the active site in subunit 1, a binuclear center (BNC) formed by heme A3 and copper B (CU(B)). The BNC reduces molecular oxygen to 2 water molecules using 4 electrons from cytochrome c in the IMS and 4 protons from the mitochondrial matrix.</text>
</comment>
<comment type="catalytic activity">
    <reaction evidence="3">
        <text>4 Fe(II)-[cytochrome c] + O2 + 8 H(+)(in) = 4 Fe(III)-[cytochrome c] + 2 H2O + 4 H(+)(out)</text>
        <dbReference type="Rhea" id="RHEA:11436"/>
        <dbReference type="Rhea" id="RHEA-COMP:10350"/>
        <dbReference type="Rhea" id="RHEA-COMP:14399"/>
        <dbReference type="ChEBI" id="CHEBI:15377"/>
        <dbReference type="ChEBI" id="CHEBI:15378"/>
        <dbReference type="ChEBI" id="CHEBI:15379"/>
        <dbReference type="ChEBI" id="CHEBI:29033"/>
        <dbReference type="ChEBI" id="CHEBI:29034"/>
        <dbReference type="EC" id="7.1.1.9"/>
    </reaction>
    <physiologicalReaction direction="left-to-right" evidence="3">
        <dbReference type="Rhea" id="RHEA:11437"/>
    </physiologicalReaction>
</comment>
<comment type="cofactor">
    <cofactor evidence="2">
        <name>heme</name>
        <dbReference type="ChEBI" id="CHEBI:30413"/>
    </cofactor>
    <text evidence="2">Binds 2 heme A groups non-covalently per subunit.</text>
</comment>
<comment type="cofactor">
    <cofactor evidence="2">
        <name>Cu cation</name>
        <dbReference type="ChEBI" id="CHEBI:23378"/>
    </cofactor>
    <text evidence="2">Binds a copper B center.</text>
</comment>
<comment type="pathway">
    <text evidence="3">Energy metabolism; oxidative phosphorylation.</text>
</comment>
<comment type="subunit">
    <text evidence="1 2">Component of the cytochrome c oxidase (complex IV, CIV), a multisubunit enzyme composed of 14 subunits. The complex is composed of a catalytic core of 3 subunits MT-CO1, MT-CO2 and MT-CO3, encoded in the mitochondrial DNA, and 11 supernumerary subunits COX4I, COX5A, COX5B, COX6A, COX6B, COX6C, COX7A, COX7B, COX7C, COX8 and NDUFA4, which are encoded in the nuclear genome. The complex exists as a monomer or a dimer and forms supercomplexes (SCs) in the inner mitochondrial membrane with NADH-ubiquinone oxidoreductase (complex I, CI) and ubiquinol-cytochrome c oxidoreductase (cytochrome b-c1 complex, complex III, CIII), resulting in different assemblies (supercomplex SCI(1)III(2)IV(1) and megacomplex MCI(2)III(2)IV(2)) (By similarity). As a newly synthesized protein, rapidly incorporates into a multi-subunit assembly intermediate in the inner membrane, called MITRAC (mitochondrial translation regulation assembly intermediate of cytochrome c oxidase) complex, whose core components are COA3/MITRAC12 and COX14. Within the MITRAC complex, interacts with COA3 and with SMIM20/MITRAC7; the interaction with SMIM20 stabilizes the newly synthesized MT-CO1 and prevents its premature turnover. Interacts with TMEM177 in a COX20-dependent manner (By similarity).</text>
</comment>
<comment type="subcellular location">
    <subcellularLocation>
        <location evidence="2">Mitochondrion inner membrane</location>
        <topology evidence="2">Multi-pass membrane protein</topology>
    </subcellularLocation>
</comment>
<comment type="similarity">
    <text evidence="4">Belongs to the heme-copper respiratory oxidase family.</text>
</comment>
<geneLocation type="mitochondrion"/>
<name>COX1_GOMVA</name>
<accession>P29646</accession>
<sequence length="155" mass="17102">FFGHPEVYILILPGFGMISHIVAYYSGKKEPFGYMGMVWAMMAIGLLGFIVWAHHMFTVGMDVDTRAYFTSATMIIAIPTGVKVFSWLATLHGGSIKWETPLLWALGFIFLFTVGGLTGIVLANSSLDIVLHDTYYVVAHFHYVLSMGAVFAIVA</sequence>
<protein>
    <recommendedName>
        <fullName>Cytochrome c oxidase subunit 1</fullName>
        <ecNumber>7.1.1.9</ecNumber>
    </recommendedName>
    <alternativeName>
        <fullName>Cytochrome c oxidase polypeptide I</fullName>
    </alternativeName>
</protein>
<dbReference type="EC" id="7.1.1.9"/>
<dbReference type="EMBL" id="M64894">
    <property type="protein sequence ID" value="AAB01460.1"/>
    <property type="molecule type" value="Genomic_DNA"/>
</dbReference>
<dbReference type="SMR" id="P29646"/>
<dbReference type="UniPathway" id="UPA00705"/>
<dbReference type="GO" id="GO:0005743">
    <property type="term" value="C:mitochondrial inner membrane"/>
    <property type="evidence" value="ECO:0007669"/>
    <property type="project" value="UniProtKB-SubCell"/>
</dbReference>
<dbReference type="GO" id="GO:0045277">
    <property type="term" value="C:respiratory chain complex IV"/>
    <property type="evidence" value="ECO:0000250"/>
    <property type="project" value="UniProtKB"/>
</dbReference>
<dbReference type="GO" id="GO:0004129">
    <property type="term" value="F:cytochrome-c oxidase activity"/>
    <property type="evidence" value="ECO:0007669"/>
    <property type="project" value="UniProtKB-EC"/>
</dbReference>
<dbReference type="GO" id="GO:0020037">
    <property type="term" value="F:heme binding"/>
    <property type="evidence" value="ECO:0007669"/>
    <property type="project" value="InterPro"/>
</dbReference>
<dbReference type="GO" id="GO:0046872">
    <property type="term" value="F:metal ion binding"/>
    <property type="evidence" value="ECO:0007669"/>
    <property type="project" value="UniProtKB-KW"/>
</dbReference>
<dbReference type="GO" id="GO:0015990">
    <property type="term" value="P:electron transport coupled proton transport"/>
    <property type="evidence" value="ECO:0007669"/>
    <property type="project" value="TreeGrafter"/>
</dbReference>
<dbReference type="GO" id="GO:0006123">
    <property type="term" value="P:mitochondrial electron transport, cytochrome c to oxygen"/>
    <property type="evidence" value="ECO:0007669"/>
    <property type="project" value="TreeGrafter"/>
</dbReference>
<dbReference type="FunFam" id="1.20.210.10:FF:000009">
    <property type="entry name" value="Cytochrome c oxidase subunit 1"/>
    <property type="match status" value="1"/>
</dbReference>
<dbReference type="Gene3D" id="1.20.210.10">
    <property type="entry name" value="Cytochrome c oxidase-like, subunit I domain"/>
    <property type="match status" value="1"/>
</dbReference>
<dbReference type="InterPro" id="IPR023616">
    <property type="entry name" value="Cyt_c_oxase-like_su1_dom"/>
</dbReference>
<dbReference type="InterPro" id="IPR036927">
    <property type="entry name" value="Cyt_c_oxase-like_su1_sf"/>
</dbReference>
<dbReference type="InterPro" id="IPR000883">
    <property type="entry name" value="Cyt_C_Oxase_1"/>
</dbReference>
<dbReference type="PANTHER" id="PTHR10422">
    <property type="entry name" value="CYTOCHROME C OXIDASE SUBUNIT 1"/>
    <property type="match status" value="1"/>
</dbReference>
<dbReference type="PANTHER" id="PTHR10422:SF18">
    <property type="entry name" value="CYTOCHROME C OXIDASE SUBUNIT 1"/>
    <property type="match status" value="1"/>
</dbReference>
<dbReference type="Pfam" id="PF00115">
    <property type="entry name" value="COX1"/>
    <property type="match status" value="1"/>
</dbReference>
<dbReference type="PRINTS" id="PR01165">
    <property type="entry name" value="CYCOXIDASEI"/>
</dbReference>
<dbReference type="SUPFAM" id="SSF81442">
    <property type="entry name" value="Cytochrome c oxidase subunit I-like"/>
    <property type="match status" value="1"/>
</dbReference>
<dbReference type="PROSITE" id="PS50855">
    <property type="entry name" value="COX1"/>
    <property type="match status" value="1"/>
</dbReference>
<proteinExistence type="inferred from homology"/>
<organism>
    <name type="scientific">Gomphosus varius</name>
    <name type="common">Bird wrasse</name>
    <name type="synonym">Gomphosus tricolor</name>
    <dbReference type="NCBI Taxonomy" id="8249"/>
    <lineage>
        <taxon>Eukaryota</taxon>
        <taxon>Metazoa</taxon>
        <taxon>Chordata</taxon>
        <taxon>Craniata</taxon>
        <taxon>Vertebrata</taxon>
        <taxon>Euteleostomi</taxon>
        <taxon>Actinopterygii</taxon>
        <taxon>Neopterygii</taxon>
        <taxon>Teleostei</taxon>
        <taxon>Neoteleostei</taxon>
        <taxon>Acanthomorphata</taxon>
        <taxon>Eupercaria</taxon>
        <taxon>Labriformes</taxon>
        <taxon>Labridae</taxon>
        <taxon>Gomphosus</taxon>
    </lineage>
</organism>
<keyword id="KW-0186">Copper</keyword>
<keyword id="KW-0249">Electron transport</keyword>
<keyword id="KW-0349">Heme</keyword>
<keyword id="KW-0408">Iron</keyword>
<keyword id="KW-0460">Magnesium</keyword>
<keyword id="KW-0472">Membrane</keyword>
<keyword id="KW-0479">Metal-binding</keyword>
<keyword id="KW-0496">Mitochondrion</keyword>
<keyword id="KW-0999">Mitochondrion inner membrane</keyword>
<keyword id="KW-0679">Respiratory chain</keyword>
<keyword id="KW-0915">Sodium</keyword>
<keyword id="KW-1278">Translocase</keyword>
<keyword id="KW-0812">Transmembrane</keyword>
<keyword id="KW-1133">Transmembrane helix</keyword>
<keyword id="KW-0813">Transport</keyword>
<evidence type="ECO:0000250" key="1">
    <source>
        <dbReference type="UniProtKB" id="P00395"/>
    </source>
</evidence>
<evidence type="ECO:0000250" key="2">
    <source>
        <dbReference type="UniProtKB" id="P00396"/>
    </source>
</evidence>
<evidence type="ECO:0000250" key="3">
    <source>
        <dbReference type="UniProtKB" id="P00401"/>
    </source>
</evidence>
<evidence type="ECO:0000305" key="4"/>
<feature type="chain" id="PRO_0000183339" description="Cytochrome c oxidase subunit 1">
    <location>
        <begin position="1" status="less than"/>
        <end position="155" status="greater than"/>
    </location>
</feature>
<feature type="transmembrane region" description="Helical; Name=VI" evidence="2">
    <location>
        <begin position="1" status="less than"/>
        <end position="25"/>
    </location>
</feature>
<feature type="topological domain" description="Mitochondrial matrix" evidence="2">
    <location>
        <begin position="26"/>
        <end position="33"/>
    </location>
</feature>
<feature type="transmembrane region" description="Helical; Name=VII" evidence="2">
    <location>
        <begin position="34"/>
        <end position="50"/>
    </location>
</feature>
<feature type="topological domain" description="Mitochondrial intermembrane" evidence="2">
    <location>
        <begin position="51"/>
        <end position="62"/>
    </location>
</feature>
<feature type="transmembrane region" description="Helical; Name=VIII" evidence="2">
    <location>
        <begin position="63"/>
        <end position="91"/>
    </location>
</feature>
<feature type="topological domain" description="Mitochondrial matrix" evidence="2">
    <location>
        <begin position="92"/>
        <end position="99"/>
    </location>
</feature>
<feature type="transmembrane region" description="Helical; Name=IX" evidence="2">
    <location>
        <begin position="100"/>
        <end position="121"/>
    </location>
</feature>
<feature type="topological domain" description="Mitochondrial intermembrane" evidence="2">
    <location>
        <begin position="122"/>
        <end position="134"/>
    </location>
</feature>
<feature type="transmembrane region" description="Helical; Name=X" evidence="2">
    <location>
        <begin position="135"/>
        <end position="155" status="greater than"/>
    </location>
</feature>
<feature type="binding site" evidence="2">
    <location>
        <position position="4"/>
    </location>
    <ligand>
        <name>Cu cation</name>
        <dbReference type="ChEBI" id="CHEBI:23378"/>
        <label>B</label>
    </ligand>
</feature>
<feature type="binding site" evidence="2">
    <location>
        <position position="8"/>
    </location>
    <ligand>
        <name>O2</name>
        <dbReference type="ChEBI" id="CHEBI:15379"/>
    </ligand>
</feature>
<feature type="binding site" evidence="2">
    <location>
        <position position="54"/>
    </location>
    <ligand>
        <name>Cu cation</name>
        <dbReference type="ChEBI" id="CHEBI:23378"/>
        <label>B</label>
    </ligand>
</feature>
<feature type="binding site" evidence="2">
    <location>
        <position position="55"/>
    </location>
    <ligand>
        <name>Cu cation</name>
        <dbReference type="ChEBI" id="CHEBI:23378"/>
        <label>B</label>
    </ligand>
</feature>
<feature type="binding site" evidence="2">
    <location>
        <position position="132"/>
    </location>
    <ligand>
        <name>Mg(2+)</name>
        <dbReference type="ChEBI" id="CHEBI:18420"/>
        <note>ligand shared with MT-CO2</note>
    </ligand>
</feature>
<feature type="binding site" evidence="2">
    <location>
        <position position="133"/>
    </location>
    <ligand>
        <name>Mg(2+)</name>
        <dbReference type="ChEBI" id="CHEBI:18420"/>
        <note>ligand shared with MT-CO2</note>
    </ligand>
</feature>
<feature type="binding site" description="axial binding residue" evidence="2">
    <location>
        <position position="140"/>
    </location>
    <ligand>
        <name>heme a3</name>
        <dbReference type="ChEBI" id="CHEBI:83282"/>
        <note>high-spin</note>
    </ligand>
    <ligandPart>
        <name>Fe</name>
        <dbReference type="ChEBI" id="CHEBI:18248"/>
    </ligandPart>
</feature>
<feature type="binding site" description="axial binding residue" evidence="2">
    <location>
        <position position="142"/>
    </location>
    <ligand>
        <name>Fe(II)-heme a</name>
        <dbReference type="ChEBI" id="CHEBI:61715"/>
        <note>low-spin</note>
    </ligand>
    <ligandPart>
        <name>Fe</name>
        <dbReference type="ChEBI" id="CHEBI:18248"/>
    </ligandPart>
</feature>
<feature type="cross-link" description="1'-histidyl-3'-tyrosine (His-Tyr)" evidence="2">
    <location>
        <begin position="4"/>
        <end position="8"/>
    </location>
</feature>
<feature type="non-terminal residue">
    <location>
        <position position="1"/>
    </location>
</feature>
<feature type="non-terminal residue">
    <location>
        <position position="155"/>
    </location>
</feature>